<comment type="function">
    <text evidence="1">This enzyme is involved in nucleotide metabolism: it produces dUMP, the immediate precursor of thymidine nucleotides and it decreases the intracellular concentration of dUTP so that uracil cannot be incorporated into DNA.</text>
</comment>
<comment type="catalytic activity">
    <reaction evidence="1">
        <text>dUTP + H2O = dUMP + diphosphate + H(+)</text>
        <dbReference type="Rhea" id="RHEA:10248"/>
        <dbReference type="ChEBI" id="CHEBI:15377"/>
        <dbReference type="ChEBI" id="CHEBI:15378"/>
        <dbReference type="ChEBI" id="CHEBI:33019"/>
        <dbReference type="ChEBI" id="CHEBI:61555"/>
        <dbReference type="ChEBI" id="CHEBI:246422"/>
        <dbReference type="EC" id="3.6.1.23"/>
    </reaction>
</comment>
<comment type="cofactor">
    <cofactor evidence="1">
        <name>Mg(2+)</name>
        <dbReference type="ChEBI" id="CHEBI:18420"/>
    </cofactor>
</comment>
<comment type="pathway">
    <text evidence="1">Pyrimidine metabolism; dUMP biosynthesis; dUMP from dCTP (dUTP route): step 2/2.</text>
</comment>
<comment type="similarity">
    <text evidence="1">Belongs to the dUTPase family.</text>
</comment>
<keyword id="KW-0002">3D-structure</keyword>
<keyword id="KW-0378">Hydrolase</keyword>
<keyword id="KW-0460">Magnesium</keyword>
<keyword id="KW-0479">Metal-binding</keyword>
<keyword id="KW-0546">Nucleotide metabolism</keyword>
<keyword id="KW-1185">Reference proteome</keyword>
<sequence length="145" mass="15801">MKIKIQKIHPNALIPKYQTDGSSGFDLHAVEEVMIKPHSVGLVKIGICLSLEVGYELQVRTRSGLALNHQVMVLNSPGTVDNDYRGEIKVILANLSDKDFKVQVGDRIAQGVVQKTYKAEFIECEQLDETSRGSGGFGSTGVSKA</sequence>
<accession>O25536</accession>
<dbReference type="EC" id="3.6.1.23" evidence="1"/>
<dbReference type="EMBL" id="AE000511">
    <property type="protein sequence ID" value="AAD07907.1"/>
    <property type="molecule type" value="Genomic_DNA"/>
</dbReference>
<dbReference type="PIR" id="A64628">
    <property type="entry name" value="A64628"/>
</dbReference>
<dbReference type="RefSeq" id="NP_207659.1">
    <property type="nucleotide sequence ID" value="NC_000915.1"/>
</dbReference>
<dbReference type="RefSeq" id="WP_000694145.1">
    <property type="nucleotide sequence ID" value="NC_018939.1"/>
</dbReference>
<dbReference type="PDB" id="8HRV">
    <property type="method" value="X-ray"/>
    <property type="resolution" value="2.00 A"/>
    <property type="chains" value="A/B/C=1-145"/>
</dbReference>
<dbReference type="PDB" id="8K6W">
    <property type="method" value="X-ray"/>
    <property type="resolution" value="2.50 A"/>
    <property type="chains" value="A/B/C=1-145"/>
</dbReference>
<dbReference type="PDBsum" id="8HRV"/>
<dbReference type="PDBsum" id="8K6W"/>
<dbReference type="SMR" id="O25536"/>
<dbReference type="FunCoup" id="O25536">
    <property type="interactions" value="275"/>
</dbReference>
<dbReference type="IntAct" id="O25536">
    <property type="interactions" value="1"/>
</dbReference>
<dbReference type="STRING" id="85962.HP_0865"/>
<dbReference type="PaxDb" id="85962-C694_04430"/>
<dbReference type="EnsemblBacteria" id="AAD07907">
    <property type="protein sequence ID" value="AAD07907"/>
    <property type="gene ID" value="HP_0865"/>
</dbReference>
<dbReference type="KEGG" id="heo:C694_04430"/>
<dbReference type="KEGG" id="hpy:HP_0865"/>
<dbReference type="PATRIC" id="fig|85962.47.peg.919"/>
<dbReference type="eggNOG" id="COG0756">
    <property type="taxonomic scope" value="Bacteria"/>
</dbReference>
<dbReference type="InParanoid" id="O25536"/>
<dbReference type="OrthoDB" id="9809956at2"/>
<dbReference type="PhylomeDB" id="O25536"/>
<dbReference type="UniPathway" id="UPA00610">
    <property type="reaction ID" value="UER00666"/>
</dbReference>
<dbReference type="Proteomes" id="UP000000429">
    <property type="component" value="Chromosome"/>
</dbReference>
<dbReference type="GO" id="GO:0004170">
    <property type="term" value="F:dUTP diphosphatase activity"/>
    <property type="evidence" value="ECO:0000318"/>
    <property type="project" value="GO_Central"/>
</dbReference>
<dbReference type="GO" id="GO:0000287">
    <property type="term" value="F:magnesium ion binding"/>
    <property type="evidence" value="ECO:0000318"/>
    <property type="project" value="GO_Central"/>
</dbReference>
<dbReference type="GO" id="GO:0006226">
    <property type="term" value="P:dUMP biosynthetic process"/>
    <property type="evidence" value="ECO:0000318"/>
    <property type="project" value="GO_Central"/>
</dbReference>
<dbReference type="GO" id="GO:0046081">
    <property type="term" value="P:dUTP catabolic process"/>
    <property type="evidence" value="ECO:0000318"/>
    <property type="project" value="GO_Central"/>
</dbReference>
<dbReference type="CDD" id="cd07557">
    <property type="entry name" value="trimeric_dUTPase"/>
    <property type="match status" value="1"/>
</dbReference>
<dbReference type="FunFam" id="2.70.40.10:FF:000013">
    <property type="entry name" value="Deoxyuridine 5'-triphosphate nucleotidohydrolase"/>
    <property type="match status" value="1"/>
</dbReference>
<dbReference type="Gene3D" id="2.70.40.10">
    <property type="match status" value="1"/>
</dbReference>
<dbReference type="HAMAP" id="MF_00116">
    <property type="entry name" value="dUTPase_bact"/>
    <property type="match status" value="1"/>
</dbReference>
<dbReference type="InterPro" id="IPR008181">
    <property type="entry name" value="dUTPase"/>
</dbReference>
<dbReference type="InterPro" id="IPR029054">
    <property type="entry name" value="dUTPase-like"/>
</dbReference>
<dbReference type="InterPro" id="IPR036157">
    <property type="entry name" value="dUTPase-like_sf"/>
</dbReference>
<dbReference type="InterPro" id="IPR033704">
    <property type="entry name" value="dUTPase_trimeric"/>
</dbReference>
<dbReference type="NCBIfam" id="TIGR00576">
    <property type="entry name" value="dut"/>
    <property type="match status" value="1"/>
</dbReference>
<dbReference type="NCBIfam" id="NF001862">
    <property type="entry name" value="PRK00601.1"/>
    <property type="match status" value="1"/>
</dbReference>
<dbReference type="PANTHER" id="PTHR11241">
    <property type="entry name" value="DEOXYURIDINE 5'-TRIPHOSPHATE NUCLEOTIDOHYDROLASE"/>
    <property type="match status" value="1"/>
</dbReference>
<dbReference type="PANTHER" id="PTHR11241:SF0">
    <property type="entry name" value="DEOXYURIDINE 5'-TRIPHOSPHATE NUCLEOTIDOHYDROLASE"/>
    <property type="match status" value="1"/>
</dbReference>
<dbReference type="Pfam" id="PF00692">
    <property type="entry name" value="dUTPase"/>
    <property type="match status" value="1"/>
</dbReference>
<dbReference type="SUPFAM" id="SSF51283">
    <property type="entry name" value="dUTPase-like"/>
    <property type="match status" value="1"/>
</dbReference>
<feature type="chain" id="PRO_0000182869" description="Deoxyuridine 5'-triphosphate nucleotidohydrolase">
    <location>
        <begin position="1"/>
        <end position="145"/>
    </location>
</feature>
<feature type="binding site" evidence="1">
    <location>
        <begin position="62"/>
        <end position="64"/>
    </location>
    <ligand>
        <name>substrate</name>
    </ligand>
</feature>
<feature type="binding site" evidence="1">
    <location>
        <position position="75"/>
    </location>
    <ligand>
        <name>substrate</name>
    </ligand>
</feature>
<feature type="binding site" evidence="1">
    <location>
        <begin position="79"/>
        <end position="81"/>
    </location>
    <ligand>
        <name>substrate</name>
    </ligand>
</feature>
<feature type="binding site" evidence="1">
    <location>
        <position position="89"/>
    </location>
    <ligand>
        <name>substrate</name>
    </ligand>
</feature>
<gene>
    <name evidence="1" type="primary">dut</name>
    <name type="ordered locus">HP_0865</name>
</gene>
<protein>
    <recommendedName>
        <fullName evidence="1">Deoxyuridine 5'-triphosphate nucleotidohydrolase</fullName>
        <shortName evidence="1">dUTPase</shortName>
        <ecNumber evidence="1">3.6.1.23</ecNumber>
    </recommendedName>
    <alternativeName>
        <fullName evidence="1">dUTP pyrophosphatase</fullName>
    </alternativeName>
</protein>
<reference key="1">
    <citation type="journal article" date="1997" name="Nature">
        <title>The complete genome sequence of the gastric pathogen Helicobacter pylori.</title>
        <authorList>
            <person name="Tomb J.-F."/>
            <person name="White O."/>
            <person name="Kerlavage A.R."/>
            <person name="Clayton R.A."/>
            <person name="Sutton G.G."/>
            <person name="Fleischmann R.D."/>
            <person name="Ketchum K.A."/>
            <person name="Klenk H.-P."/>
            <person name="Gill S.R."/>
            <person name="Dougherty B.A."/>
            <person name="Nelson K.E."/>
            <person name="Quackenbush J."/>
            <person name="Zhou L."/>
            <person name="Kirkness E.F."/>
            <person name="Peterson S.N."/>
            <person name="Loftus B.J."/>
            <person name="Richardson D.L."/>
            <person name="Dodson R.J."/>
            <person name="Khalak H.G."/>
            <person name="Glodek A."/>
            <person name="McKenney K."/>
            <person name="FitzGerald L.M."/>
            <person name="Lee N."/>
            <person name="Adams M.D."/>
            <person name="Hickey E.K."/>
            <person name="Berg D.E."/>
            <person name="Gocayne J.D."/>
            <person name="Utterback T.R."/>
            <person name="Peterson J.D."/>
            <person name="Kelley J.M."/>
            <person name="Cotton M.D."/>
            <person name="Weidman J.F."/>
            <person name="Fujii C."/>
            <person name="Bowman C."/>
            <person name="Watthey L."/>
            <person name="Wallin E."/>
            <person name="Hayes W.S."/>
            <person name="Borodovsky M."/>
            <person name="Karp P.D."/>
            <person name="Smith H.O."/>
            <person name="Fraser C.M."/>
            <person name="Venter J.C."/>
        </authorList>
    </citation>
    <scope>NUCLEOTIDE SEQUENCE [LARGE SCALE GENOMIC DNA]</scope>
    <source>
        <strain>ATCC 700392 / 26695</strain>
    </source>
</reference>
<proteinExistence type="evidence at protein level"/>
<name>DUT_HELPY</name>
<organism>
    <name type="scientific">Helicobacter pylori (strain ATCC 700392 / 26695)</name>
    <name type="common">Campylobacter pylori</name>
    <dbReference type="NCBI Taxonomy" id="85962"/>
    <lineage>
        <taxon>Bacteria</taxon>
        <taxon>Pseudomonadati</taxon>
        <taxon>Campylobacterota</taxon>
        <taxon>Epsilonproteobacteria</taxon>
        <taxon>Campylobacterales</taxon>
        <taxon>Helicobacteraceae</taxon>
        <taxon>Helicobacter</taxon>
    </lineage>
</organism>
<evidence type="ECO:0000255" key="1">
    <source>
        <dbReference type="HAMAP-Rule" id="MF_00116"/>
    </source>
</evidence>